<proteinExistence type="inferred from homology"/>
<name>ARNF_SHIDS</name>
<feature type="chain" id="PRO_0000382019" description="Probable 4-amino-4-deoxy-L-arabinose-phosphoundecaprenol flippase subunit ArnF">
    <location>
        <begin position="1"/>
        <end position="128"/>
    </location>
</feature>
<feature type="topological domain" description="Cytoplasmic" evidence="1">
    <location>
        <begin position="1"/>
        <end position="2"/>
    </location>
</feature>
<feature type="transmembrane region" description="Helical" evidence="1">
    <location>
        <begin position="3"/>
        <end position="23"/>
    </location>
</feature>
<feature type="topological domain" description="Periplasmic" evidence="1">
    <location>
        <begin position="24"/>
        <end position="35"/>
    </location>
</feature>
<feature type="transmembrane region" description="Helical" evidence="1">
    <location>
        <begin position="36"/>
        <end position="56"/>
    </location>
</feature>
<feature type="topological domain" description="Cytoplasmic" evidence="1">
    <location>
        <begin position="57"/>
        <end position="77"/>
    </location>
</feature>
<feature type="transmembrane region" description="Helical" evidence="1">
    <location>
        <begin position="78"/>
        <end position="98"/>
    </location>
</feature>
<feature type="topological domain" description="Periplasmic" evidence="1">
    <location>
        <begin position="99"/>
        <end position="100"/>
    </location>
</feature>
<feature type="transmembrane region" description="Helical" evidence="1">
    <location>
        <begin position="101"/>
        <end position="121"/>
    </location>
</feature>
<feature type="topological domain" description="Cytoplasmic" evidence="1">
    <location>
        <begin position="122"/>
        <end position="128"/>
    </location>
</feature>
<evidence type="ECO:0000255" key="1">
    <source>
        <dbReference type="HAMAP-Rule" id="MF_00538"/>
    </source>
</evidence>
<evidence type="ECO:0000305" key="2"/>
<keyword id="KW-0997">Cell inner membrane</keyword>
<keyword id="KW-1003">Cell membrane</keyword>
<keyword id="KW-0441">Lipid A biosynthesis</keyword>
<keyword id="KW-0444">Lipid biosynthesis</keyword>
<keyword id="KW-0443">Lipid metabolism</keyword>
<keyword id="KW-0448">Lipopolysaccharide biosynthesis</keyword>
<keyword id="KW-0472">Membrane</keyword>
<keyword id="KW-1185">Reference proteome</keyword>
<keyword id="KW-0812">Transmembrane</keyword>
<keyword id="KW-1133">Transmembrane helix</keyword>
<keyword id="KW-0813">Transport</keyword>
<dbReference type="EMBL" id="CP000034">
    <property type="protein sequence ID" value="ABB62525.1"/>
    <property type="status" value="ALT_INIT"/>
    <property type="molecule type" value="Genomic_DNA"/>
</dbReference>
<dbReference type="RefSeq" id="WP_000523884.1">
    <property type="nucleotide sequence ID" value="NC_007606.1"/>
</dbReference>
<dbReference type="RefSeq" id="YP_404016.2">
    <property type="nucleotide sequence ID" value="NC_007606.1"/>
</dbReference>
<dbReference type="STRING" id="300267.SDY_2454"/>
<dbReference type="EnsemblBacteria" id="ABB62525">
    <property type="protein sequence ID" value="ABB62525"/>
    <property type="gene ID" value="SDY_2454"/>
</dbReference>
<dbReference type="KEGG" id="sdy:SDY_2454"/>
<dbReference type="PATRIC" id="fig|300267.13.peg.2961"/>
<dbReference type="HOGENOM" id="CLU_1243704_0_0_6"/>
<dbReference type="UniPathway" id="UPA00030"/>
<dbReference type="Proteomes" id="UP000002716">
    <property type="component" value="Chromosome"/>
</dbReference>
<dbReference type="GO" id="GO:0005886">
    <property type="term" value="C:plasma membrane"/>
    <property type="evidence" value="ECO:0007669"/>
    <property type="project" value="UniProtKB-SubCell"/>
</dbReference>
<dbReference type="GO" id="GO:1901505">
    <property type="term" value="F:carbohydrate derivative transmembrane transporter activity"/>
    <property type="evidence" value="ECO:0007669"/>
    <property type="project" value="InterPro"/>
</dbReference>
<dbReference type="GO" id="GO:0009245">
    <property type="term" value="P:lipid A biosynthetic process"/>
    <property type="evidence" value="ECO:0007669"/>
    <property type="project" value="UniProtKB-UniRule"/>
</dbReference>
<dbReference type="GO" id="GO:0009103">
    <property type="term" value="P:lipopolysaccharide biosynthetic process"/>
    <property type="evidence" value="ECO:0007669"/>
    <property type="project" value="UniProtKB-UniRule"/>
</dbReference>
<dbReference type="Gene3D" id="1.10.3730.20">
    <property type="match status" value="1"/>
</dbReference>
<dbReference type="HAMAP" id="MF_00538">
    <property type="entry name" value="Flippase_ArnF"/>
    <property type="match status" value="1"/>
</dbReference>
<dbReference type="InterPro" id="IPR022832">
    <property type="entry name" value="Flippase_ArnF"/>
</dbReference>
<dbReference type="InterPro" id="IPR000390">
    <property type="entry name" value="Small_drug/metabolite_transptr"/>
</dbReference>
<dbReference type="NCBIfam" id="NF002816">
    <property type="entry name" value="PRK02971.1-2"/>
    <property type="match status" value="1"/>
</dbReference>
<dbReference type="PANTHER" id="PTHR30561:SF9">
    <property type="entry name" value="4-AMINO-4-DEOXY-L-ARABINOSE-PHOSPHOUNDECAPRENOL FLIPPASE SUBUNIT ARNF-RELATED"/>
    <property type="match status" value="1"/>
</dbReference>
<dbReference type="PANTHER" id="PTHR30561">
    <property type="entry name" value="SMR FAMILY PROTON-DEPENDENT DRUG EFFLUX TRANSPORTER SUGE"/>
    <property type="match status" value="1"/>
</dbReference>
<dbReference type="SUPFAM" id="SSF103481">
    <property type="entry name" value="Multidrug resistance efflux transporter EmrE"/>
    <property type="match status" value="1"/>
</dbReference>
<gene>
    <name evidence="1" type="primary">arnF</name>
    <name type="ordered locus">SDY_2454</name>
</gene>
<organism>
    <name type="scientific">Shigella dysenteriae serotype 1 (strain Sd197)</name>
    <dbReference type="NCBI Taxonomy" id="300267"/>
    <lineage>
        <taxon>Bacteria</taxon>
        <taxon>Pseudomonadati</taxon>
        <taxon>Pseudomonadota</taxon>
        <taxon>Gammaproteobacteria</taxon>
        <taxon>Enterobacterales</taxon>
        <taxon>Enterobacteriaceae</taxon>
        <taxon>Shigella</taxon>
    </lineage>
</organism>
<comment type="function">
    <text evidence="1">Translocates 4-amino-4-deoxy-L-arabinose-phosphoundecaprenol (alpha-L-Ara4N-phosphoundecaprenol) from the cytoplasmic to the periplasmic side of the inner membrane.</text>
</comment>
<comment type="pathway">
    <text evidence="1">Bacterial outer membrane biogenesis; lipopolysaccharide biosynthesis.</text>
</comment>
<comment type="subunit">
    <text evidence="1">Heterodimer of ArnE and ArnF.</text>
</comment>
<comment type="subcellular location">
    <subcellularLocation>
        <location evidence="1">Cell inner membrane</location>
        <topology evidence="1">Multi-pass membrane protein</topology>
    </subcellularLocation>
</comment>
<comment type="similarity">
    <text evidence="1">Belongs to the ArnF family.</text>
</comment>
<comment type="sequence caution" evidence="2">
    <conflict type="erroneous initiation">
        <sequence resource="EMBL-CDS" id="ABB62525"/>
    </conflict>
</comment>
<protein>
    <recommendedName>
        <fullName evidence="1">Probable 4-amino-4-deoxy-L-arabinose-phosphoundecaprenol flippase subunit ArnF</fullName>
        <shortName evidence="1">L-Ara4N-phosphoundecaprenol flippase subunit ArnF</shortName>
    </recommendedName>
    <alternativeName>
        <fullName evidence="1">Undecaprenyl phosphate-aminoarabinose flippase subunit ArnF</fullName>
    </alternativeName>
</protein>
<reference key="1">
    <citation type="journal article" date="2005" name="Nucleic Acids Res.">
        <title>Genome dynamics and diversity of Shigella species, the etiologic agents of bacillary dysentery.</title>
        <authorList>
            <person name="Yang F."/>
            <person name="Yang J."/>
            <person name="Zhang X."/>
            <person name="Chen L."/>
            <person name="Jiang Y."/>
            <person name="Yan Y."/>
            <person name="Tang X."/>
            <person name="Wang J."/>
            <person name="Xiong Z."/>
            <person name="Dong J."/>
            <person name="Xue Y."/>
            <person name="Zhu Y."/>
            <person name="Xu X."/>
            <person name="Sun L."/>
            <person name="Chen S."/>
            <person name="Nie H."/>
            <person name="Peng J."/>
            <person name="Xu J."/>
            <person name="Wang Y."/>
            <person name="Yuan Z."/>
            <person name="Wen Y."/>
            <person name="Yao Z."/>
            <person name="Shen Y."/>
            <person name="Qiang B."/>
            <person name="Hou Y."/>
            <person name="Yu J."/>
            <person name="Jin Q."/>
        </authorList>
    </citation>
    <scope>NUCLEOTIDE SEQUENCE [LARGE SCALE GENOMIC DNA]</scope>
    <source>
        <strain>Sd197</strain>
    </source>
</reference>
<accession>Q32DT0</accession>
<sequence length="128" mass="14043">MGLMWGLFSVIIASVAQLSLGFAASHLPPMTHLWDFIATLLAFGLDARILLLGLLGYLLSVFCWYKTLHKLALSKAYALLSMSYVLVWIASMVLPGWGGTFSLKALLGVACIMSGLMLIFLPTTKQRY</sequence>